<reference key="1">
    <citation type="journal article" date="2002" name="Nature">
        <title>The genome sequence of Schizosaccharomyces pombe.</title>
        <authorList>
            <person name="Wood V."/>
            <person name="Gwilliam R."/>
            <person name="Rajandream M.A."/>
            <person name="Lyne M.H."/>
            <person name="Lyne R."/>
            <person name="Stewart A."/>
            <person name="Sgouros J.G."/>
            <person name="Peat N."/>
            <person name="Hayles J."/>
            <person name="Baker S.G."/>
            <person name="Basham D."/>
            <person name="Bowman S."/>
            <person name="Brooks K."/>
            <person name="Brown D."/>
            <person name="Brown S."/>
            <person name="Chillingworth T."/>
            <person name="Churcher C.M."/>
            <person name="Collins M."/>
            <person name="Connor R."/>
            <person name="Cronin A."/>
            <person name="Davis P."/>
            <person name="Feltwell T."/>
            <person name="Fraser A."/>
            <person name="Gentles S."/>
            <person name="Goble A."/>
            <person name="Hamlin N."/>
            <person name="Harris D.E."/>
            <person name="Hidalgo J."/>
            <person name="Hodgson G."/>
            <person name="Holroyd S."/>
            <person name="Hornsby T."/>
            <person name="Howarth S."/>
            <person name="Huckle E.J."/>
            <person name="Hunt S."/>
            <person name="Jagels K."/>
            <person name="James K.D."/>
            <person name="Jones L."/>
            <person name="Jones M."/>
            <person name="Leather S."/>
            <person name="McDonald S."/>
            <person name="McLean J."/>
            <person name="Mooney P."/>
            <person name="Moule S."/>
            <person name="Mungall K.L."/>
            <person name="Murphy L.D."/>
            <person name="Niblett D."/>
            <person name="Odell C."/>
            <person name="Oliver K."/>
            <person name="O'Neil S."/>
            <person name="Pearson D."/>
            <person name="Quail M.A."/>
            <person name="Rabbinowitsch E."/>
            <person name="Rutherford K.M."/>
            <person name="Rutter S."/>
            <person name="Saunders D."/>
            <person name="Seeger K."/>
            <person name="Sharp S."/>
            <person name="Skelton J."/>
            <person name="Simmonds M.N."/>
            <person name="Squares R."/>
            <person name="Squares S."/>
            <person name="Stevens K."/>
            <person name="Taylor K."/>
            <person name="Taylor R.G."/>
            <person name="Tivey A."/>
            <person name="Walsh S.V."/>
            <person name="Warren T."/>
            <person name="Whitehead S."/>
            <person name="Woodward J.R."/>
            <person name="Volckaert G."/>
            <person name="Aert R."/>
            <person name="Robben J."/>
            <person name="Grymonprez B."/>
            <person name="Weltjens I."/>
            <person name="Vanstreels E."/>
            <person name="Rieger M."/>
            <person name="Schaefer M."/>
            <person name="Mueller-Auer S."/>
            <person name="Gabel C."/>
            <person name="Fuchs M."/>
            <person name="Duesterhoeft A."/>
            <person name="Fritzc C."/>
            <person name="Holzer E."/>
            <person name="Moestl D."/>
            <person name="Hilbert H."/>
            <person name="Borzym K."/>
            <person name="Langer I."/>
            <person name="Beck A."/>
            <person name="Lehrach H."/>
            <person name="Reinhardt R."/>
            <person name="Pohl T.M."/>
            <person name="Eger P."/>
            <person name="Zimmermann W."/>
            <person name="Wedler H."/>
            <person name="Wambutt R."/>
            <person name="Purnelle B."/>
            <person name="Goffeau A."/>
            <person name="Cadieu E."/>
            <person name="Dreano S."/>
            <person name="Gloux S."/>
            <person name="Lelaure V."/>
            <person name="Mottier S."/>
            <person name="Galibert F."/>
            <person name="Aves S.J."/>
            <person name="Xiang Z."/>
            <person name="Hunt C."/>
            <person name="Moore K."/>
            <person name="Hurst S.M."/>
            <person name="Lucas M."/>
            <person name="Rochet M."/>
            <person name="Gaillardin C."/>
            <person name="Tallada V.A."/>
            <person name="Garzon A."/>
            <person name="Thode G."/>
            <person name="Daga R.R."/>
            <person name="Cruzado L."/>
            <person name="Jimenez J."/>
            <person name="Sanchez M."/>
            <person name="del Rey F."/>
            <person name="Benito J."/>
            <person name="Dominguez A."/>
            <person name="Revuelta J.L."/>
            <person name="Moreno S."/>
            <person name="Armstrong J."/>
            <person name="Forsburg S.L."/>
            <person name="Cerutti L."/>
            <person name="Lowe T."/>
            <person name="McCombie W.R."/>
            <person name="Paulsen I."/>
            <person name="Potashkin J."/>
            <person name="Shpakovski G.V."/>
            <person name="Ussery D."/>
            <person name="Barrell B.G."/>
            <person name="Nurse P."/>
        </authorList>
    </citation>
    <scope>NUCLEOTIDE SEQUENCE [LARGE SCALE GENOMIC DNA]</scope>
    <source>
        <strain>972 / ATCC 24843</strain>
    </source>
</reference>
<evidence type="ECO:0000250" key="1"/>
<evidence type="ECO:0000250" key="2">
    <source>
        <dbReference type="UniProtKB" id="P07284"/>
    </source>
</evidence>
<evidence type="ECO:0000250" key="3">
    <source>
        <dbReference type="UniProtKB" id="P49591"/>
    </source>
</evidence>
<evidence type="ECO:0000305" key="4"/>
<protein>
    <recommendedName>
        <fullName>Serine--tRNA ligase, cytoplasmic</fullName>
        <ecNumber evidence="2">6.1.1.11</ecNumber>
    </recommendedName>
    <alternativeName>
        <fullName>Seryl-tRNA synthetase</fullName>
        <shortName>SerRS</shortName>
    </alternativeName>
    <alternativeName>
        <fullName evidence="4">Seryl-tRNA(Ser) synthetase</fullName>
    </alternativeName>
</protein>
<keyword id="KW-0030">Aminoacyl-tRNA synthetase</keyword>
<keyword id="KW-0067">ATP-binding</keyword>
<keyword id="KW-0963">Cytoplasm</keyword>
<keyword id="KW-0436">Ligase</keyword>
<keyword id="KW-0547">Nucleotide-binding</keyword>
<keyword id="KW-0648">Protein biosynthesis</keyword>
<keyword id="KW-1185">Reference proteome</keyword>
<comment type="function">
    <text evidence="2">Catalyzes the attachment of serine to tRNA(Ser) in a two-step reaction: serine is first activated by ATP to form Ser-AMP and then transferred to the acceptor end of tRNA(Ser) (By similarity).</text>
</comment>
<comment type="catalytic activity">
    <reaction evidence="2">
        <text>tRNA(Ser) + L-serine + ATP = L-seryl-tRNA(Ser) + AMP + diphosphate + H(+)</text>
        <dbReference type="Rhea" id="RHEA:12292"/>
        <dbReference type="Rhea" id="RHEA-COMP:9669"/>
        <dbReference type="Rhea" id="RHEA-COMP:9703"/>
        <dbReference type="ChEBI" id="CHEBI:15378"/>
        <dbReference type="ChEBI" id="CHEBI:30616"/>
        <dbReference type="ChEBI" id="CHEBI:33019"/>
        <dbReference type="ChEBI" id="CHEBI:33384"/>
        <dbReference type="ChEBI" id="CHEBI:78442"/>
        <dbReference type="ChEBI" id="CHEBI:78533"/>
        <dbReference type="ChEBI" id="CHEBI:456215"/>
        <dbReference type="EC" id="6.1.1.11"/>
    </reaction>
</comment>
<comment type="subunit">
    <text evidence="2">Homodimer. The tRNA molecule binds across the dimer (By similarity).</text>
</comment>
<comment type="subcellular location">
    <subcellularLocation>
        <location evidence="3">Cytoplasm</location>
        <location evidence="3">Cytosol</location>
    </subcellularLocation>
</comment>
<comment type="domain">
    <text evidence="3">Consists of two distinct domains, a catalytic core and a N-terminal extension that is involved in tRNA binding.</text>
</comment>
<comment type="similarity">
    <text evidence="4">Belongs to the class-II aminoacyl-tRNA synthetase family. Type-1 seryl-tRNA synthetase subfamily.</text>
</comment>
<comment type="caution">
    <text evidence="4">Although this enzyme participates in the selenocysteinyl-tRNA(Sec) biosynthesis pathway in many taxa, this pathway has been shown in PubMed:30742068 to be lost in dikarya.</text>
</comment>
<feature type="chain" id="PRO_0000122198" description="Serine--tRNA ligase, cytoplasmic">
    <location>
        <begin position="1"/>
        <end position="450"/>
    </location>
</feature>
<feature type="binding site" evidence="1">
    <location>
        <begin position="238"/>
        <end position="240"/>
    </location>
    <ligand>
        <name>L-serine</name>
        <dbReference type="ChEBI" id="CHEBI:33384"/>
    </ligand>
</feature>
<feature type="binding site" evidence="1">
    <location>
        <begin position="271"/>
        <end position="273"/>
    </location>
    <ligand>
        <name>ATP</name>
        <dbReference type="ChEBI" id="CHEBI:30616"/>
    </ligand>
</feature>
<feature type="binding site" evidence="1">
    <location>
        <position position="287"/>
    </location>
    <ligand>
        <name>ATP</name>
        <dbReference type="ChEBI" id="CHEBI:30616"/>
    </ligand>
</feature>
<feature type="binding site" evidence="1">
    <location>
        <position position="294"/>
    </location>
    <ligand>
        <name>L-serine</name>
        <dbReference type="ChEBI" id="CHEBI:33384"/>
    </ligand>
</feature>
<feature type="binding site" evidence="1">
    <location>
        <begin position="358"/>
        <end position="361"/>
    </location>
    <ligand>
        <name>ATP</name>
        <dbReference type="ChEBI" id="CHEBI:30616"/>
    </ligand>
</feature>
<feature type="binding site" evidence="1">
    <location>
        <position position="396"/>
    </location>
    <ligand>
        <name>L-serine</name>
        <dbReference type="ChEBI" id="CHEBI:33384"/>
    </ligand>
</feature>
<proteinExistence type="inferred from homology"/>
<sequence>MLDINLFQVEKGGNPEIIRESQRKRGADVGVVDKVIEMYKEWVSLRFELDNTNKSINRVQKEIGLKMKAKEDASELLEEKNSLTERKKNLIEQETAKNKEMLNVVSSIGNIVHDSVPVSMDEDNNEIIRKWAPEGVTVEKKNCLSHHEVLTRLDGYDPERGVKVSGHRGYFLRQYGVFFNLALIQYGLDFLEKRGYIALQAPTMLNKDVMAKTAQLEQFDEELYKVIDGDEERYLIATSEQPISAYHSGEWFEKPSEQLPLKYAGYSTCYRREAGSHGRDAWGIFRVHAFEKIEQFVLTDPEKSWEAFTEMINHAEDFYKSLELPYRIVAIVSGALNNAAAKKYDLEAWFPFQGEYKELVSCSNCTDYQSRNLEIRCGVKKMGDREKKYVHCLNSTLCATERALCCILENYQTPDGVNVPKVLQPYMGGKTFLPFTKELPKNSTSKKGKN</sequence>
<dbReference type="EC" id="6.1.1.11" evidence="2"/>
<dbReference type="EMBL" id="CU329670">
    <property type="protein sequence ID" value="CAB10149.1"/>
    <property type="molecule type" value="Genomic_DNA"/>
</dbReference>
<dbReference type="PIR" id="T38474">
    <property type="entry name" value="T38474"/>
</dbReference>
<dbReference type="SMR" id="O14018"/>
<dbReference type="BioGRID" id="278639">
    <property type="interactions" value="6"/>
</dbReference>
<dbReference type="FunCoup" id="O14018">
    <property type="interactions" value="711"/>
</dbReference>
<dbReference type="STRING" id="284812.O14018"/>
<dbReference type="iPTMnet" id="O14018"/>
<dbReference type="PaxDb" id="4896-SPAC29A4.15.1"/>
<dbReference type="EnsemblFungi" id="SPAC29A4.15.1">
    <property type="protein sequence ID" value="SPAC29A4.15.1:pep"/>
    <property type="gene ID" value="SPAC29A4.15"/>
</dbReference>
<dbReference type="KEGG" id="spo:2542163"/>
<dbReference type="PomBase" id="SPAC29A4.15"/>
<dbReference type="VEuPathDB" id="FungiDB:SPAC29A4.15"/>
<dbReference type="eggNOG" id="KOG2509">
    <property type="taxonomic scope" value="Eukaryota"/>
</dbReference>
<dbReference type="HOGENOM" id="CLU_023797_0_1_1"/>
<dbReference type="InParanoid" id="O14018"/>
<dbReference type="OMA" id="GYTPCFR"/>
<dbReference type="PhylomeDB" id="O14018"/>
<dbReference type="PRO" id="PR:O14018"/>
<dbReference type="Proteomes" id="UP000002485">
    <property type="component" value="Chromosome I"/>
</dbReference>
<dbReference type="GO" id="GO:0005829">
    <property type="term" value="C:cytosol"/>
    <property type="evidence" value="ECO:0007005"/>
    <property type="project" value="PomBase"/>
</dbReference>
<dbReference type="GO" id="GO:0005524">
    <property type="term" value="F:ATP binding"/>
    <property type="evidence" value="ECO:0007669"/>
    <property type="project" value="UniProtKB-KW"/>
</dbReference>
<dbReference type="GO" id="GO:0004828">
    <property type="term" value="F:serine-tRNA ligase activity"/>
    <property type="evidence" value="ECO:0000250"/>
    <property type="project" value="UniProtKB"/>
</dbReference>
<dbReference type="GO" id="GO:0000049">
    <property type="term" value="F:tRNA binding"/>
    <property type="evidence" value="ECO:0000318"/>
    <property type="project" value="GO_Central"/>
</dbReference>
<dbReference type="GO" id="GO:0002181">
    <property type="term" value="P:cytoplasmic translation"/>
    <property type="evidence" value="ECO:0000250"/>
    <property type="project" value="UniProtKB"/>
</dbReference>
<dbReference type="GO" id="GO:0006434">
    <property type="term" value="P:seryl-tRNA aminoacylation"/>
    <property type="evidence" value="ECO:0000250"/>
    <property type="project" value="UniProtKB"/>
</dbReference>
<dbReference type="CDD" id="cd00770">
    <property type="entry name" value="SerRS_core"/>
    <property type="match status" value="1"/>
</dbReference>
<dbReference type="FunFam" id="1.10.287.40:FF:000003">
    <property type="entry name" value="Serine--tRNA ligase cytoplasmic"/>
    <property type="match status" value="1"/>
</dbReference>
<dbReference type="FunFam" id="3.30.930.10:FF:000026">
    <property type="entry name" value="Seryl-tRNA synthetase, cytoplasmic"/>
    <property type="match status" value="1"/>
</dbReference>
<dbReference type="Gene3D" id="3.30.930.10">
    <property type="entry name" value="Bira Bifunctional Protein, Domain 2"/>
    <property type="match status" value="1"/>
</dbReference>
<dbReference type="Gene3D" id="1.10.287.40">
    <property type="entry name" value="Serine-tRNA synthetase, tRNA binding domain"/>
    <property type="match status" value="1"/>
</dbReference>
<dbReference type="InterPro" id="IPR002314">
    <property type="entry name" value="aa-tRNA-synt_IIb"/>
</dbReference>
<dbReference type="InterPro" id="IPR006195">
    <property type="entry name" value="aa-tRNA-synth_II"/>
</dbReference>
<dbReference type="InterPro" id="IPR045864">
    <property type="entry name" value="aa-tRNA-synth_II/BPL/LPL"/>
</dbReference>
<dbReference type="InterPro" id="IPR002317">
    <property type="entry name" value="Ser-tRNA-ligase_type_1"/>
</dbReference>
<dbReference type="InterPro" id="IPR015866">
    <property type="entry name" value="Ser-tRNA-synth_1_N"/>
</dbReference>
<dbReference type="InterPro" id="IPR042103">
    <property type="entry name" value="SerRS_1_N_sf"/>
</dbReference>
<dbReference type="InterPro" id="IPR033729">
    <property type="entry name" value="SerRS_core"/>
</dbReference>
<dbReference type="InterPro" id="IPR010978">
    <property type="entry name" value="tRNA-bd_arm"/>
</dbReference>
<dbReference type="NCBIfam" id="TIGR00414">
    <property type="entry name" value="serS"/>
    <property type="match status" value="1"/>
</dbReference>
<dbReference type="PANTHER" id="PTHR11778">
    <property type="entry name" value="SERYL-TRNA SYNTHETASE"/>
    <property type="match status" value="1"/>
</dbReference>
<dbReference type="Pfam" id="PF02403">
    <property type="entry name" value="Seryl_tRNA_N"/>
    <property type="match status" value="1"/>
</dbReference>
<dbReference type="Pfam" id="PF00587">
    <property type="entry name" value="tRNA-synt_2b"/>
    <property type="match status" value="1"/>
</dbReference>
<dbReference type="PIRSF" id="PIRSF001529">
    <property type="entry name" value="Ser-tRNA-synth_IIa"/>
    <property type="match status" value="1"/>
</dbReference>
<dbReference type="PRINTS" id="PR00981">
    <property type="entry name" value="TRNASYNTHSER"/>
</dbReference>
<dbReference type="SUPFAM" id="SSF55681">
    <property type="entry name" value="Class II aaRS and biotin synthetases"/>
    <property type="match status" value="1"/>
</dbReference>
<dbReference type="SUPFAM" id="SSF46589">
    <property type="entry name" value="tRNA-binding arm"/>
    <property type="match status" value="1"/>
</dbReference>
<dbReference type="PROSITE" id="PS50862">
    <property type="entry name" value="AA_TRNA_LIGASE_II"/>
    <property type="match status" value="1"/>
</dbReference>
<name>SYSC_SCHPO</name>
<accession>O14018</accession>
<gene>
    <name type="ORF">SPAC29A4.15</name>
</gene>
<organism>
    <name type="scientific">Schizosaccharomyces pombe (strain 972 / ATCC 24843)</name>
    <name type="common">Fission yeast</name>
    <dbReference type="NCBI Taxonomy" id="284812"/>
    <lineage>
        <taxon>Eukaryota</taxon>
        <taxon>Fungi</taxon>
        <taxon>Dikarya</taxon>
        <taxon>Ascomycota</taxon>
        <taxon>Taphrinomycotina</taxon>
        <taxon>Schizosaccharomycetes</taxon>
        <taxon>Schizosaccharomycetales</taxon>
        <taxon>Schizosaccharomycetaceae</taxon>
        <taxon>Schizosaccharomyces</taxon>
    </lineage>
</organism>